<name>RL22_ECTM1</name>
<evidence type="ECO:0000255" key="1">
    <source>
        <dbReference type="HAMAP-Rule" id="MF_01331"/>
    </source>
</evidence>
<evidence type="ECO:0000305" key="2"/>
<accession>A4XZ85</accession>
<gene>
    <name evidence="1" type="primary">rplV</name>
    <name type="ordered locus">Pmen_3904</name>
</gene>
<comment type="function">
    <text evidence="1">This protein binds specifically to 23S rRNA; its binding is stimulated by other ribosomal proteins, e.g. L4, L17, and L20. It is important during the early stages of 50S assembly. It makes multiple contacts with different domains of the 23S rRNA in the assembled 50S subunit and ribosome (By similarity).</text>
</comment>
<comment type="function">
    <text evidence="1">The globular domain of the protein is located near the polypeptide exit tunnel on the outside of the subunit, while an extended beta-hairpin is found that lines the wall of the exit tunnel in the center of the 70S ribosome.</text>
</comment>
<comment type="subunit">
    <text evidence="1">Part of the 50S ribosomal subunit.</text>
</comment>
<comment type="similarity">
    <text evidence="1">Belongs to the universal ribosomal protein uL22 family.</text>
</comment>
<dbReference type="EMBL" id="CP000680">
    <property type="protein sequence ID" value="ABP86651.1"/>
    <property type="molecule type" value="Genomic_DNA"/>
</dbReference>
<dbReference type="SMR" id="A4XZ85"/>
<dbReference type="STRING" id="399739.Pmen_3904"/>
<dbReference type="KEGG" id="pmy:Pmen_3904"/>
<dbReference type="eggNOG" id="COG0091">
    <property type="taxonomic scope" value="Bacteria"/>
</dbReference>
<dbReference type="HOGENOM" id="CLU_083987_3_3_6"/>
<dbReference type="OrthoDB" id="9805969at2"/>
<dbReference type="GO" id="GO:0022625">
    <property type="term" value="C:cytosolic large ribosomal subunit"/>
    <property type="evidence" value="ECO:0007669"/>
    <property type="project" value="TreeGrafter"/>
</dbReference>
<dbReference type="GO" id="GO:0019843">
    <property type="term" value="F:rRNA binding"/>
    <property type="evidence" value="ECO:0007669"/>
    <property type="project" value="UniProtKB-UniRule"/>
</dbReference>
<dbReference type="GO" id="GO:0003735">
    <property type="term" value="F:structural constituent of ribosome"/>
    <property type="evidence" value="ECO:0007669"/>
    <property type="project" value="InterPro"/>
</dbReference>
<dbReference type="GO" id="GO:0006412">
    <property type="term" value="P:translation"/>
    <property type="evidence" value="ECO:0007669"/>
    <property type="project" value="UniProtKB-UniRule"/>
</dbReference>
<dbReference type="CDD" id="cd00336">
    <property type="entry name" value="Ribosomal_L22"/>
    <property type="match status" value="1"/>
</dbReference>
<dbReference type="FunFam" id="3.90.470.10:FF:000001">
    <property type="entry name" value="50S ribosomal protein L22"/>
    <property type="match status" value="1"/>
</dbReference>
<dbReference type="Gene3D" id="3.90.470.10">
    <property type="entry name" value="Ribosomal protein L22/L17"/>
    <property type="match status" value="1"/>
</dbReference>
<dbReference type="HAMAP" id="MF_01331_B">
    <property type="entry name" value="Ribosomal_uL22_B"/>
    <property type="match status" value="1"/>
</dbReference>
<dbReference type="InterPro" id="IPR001063">
    <property type="entry name" value="Ribosomal_uL22"/>
</dbReference>
<dbReference type="InterPro" id="IPR005727">
    <property type="entry name" value="Ribosomal_uL22_bac/chlpt-type"/>
</dbReference>
<dbReference type="InterPro" id="IPR047867">
    <property type="entry name" value="Ribosomal_uL22_bac/org-type"/>
</dbReference>
<dbReference type="InterPro" id="IPR018260">
    <property type="entry name" value="Ribosomal_uL22_CS"/>
</dbReference>
<dbReference type="InterPro" id="IPR036394">
    <property type="entry name" value="Ribosomal_uL22_sf"/>
</dbReference>
<dbReference type="NCBIfam" id="TIGR01044">
    <property type="entry name" value="rplV_bact"/>
    <property type="match status" value="1"/>
</dbReference>
<dbReference type="PANTHER" id="PTHR13501">
    <property type="entry name" value="CHLOROPLAST 50S RIBOSOMAL PROTEIN L22-RELATED"/>
    <property type="match status" value="1"/>
</dbReference>
<dbReference type="PANTHER" id="PTHR13501:SF8">
    <property type="entry name" value="LARGE RIBOSOMAL SUBUNIT PROTEIN UL22M"/>
    <property type="match status" value="1"/>
</dbReference>
<dbReference type="Pfam" id="PF00237">
    <property type="entry name" value="Ribosomal_L22"/>
    <property type="match status" value="1"/>
</dbReference>
<dbReference type="SUPFAM" id="SSF54843">
    <property type="entry name" value="Ribosomal protein L22"/>
    <property type="match status" value="1"/>
</dbReference>
<dbReference type="PROSITE" id="PS00464">
    <property type="entry name" value="RIBOSOMAL_L22"/>
    <property type="match status" value="1"/>
</dbReference>
<sequence length="110" mass="11911">MEVAAKLSGARISAQKARLVADQIRGKKVGEALNLLAFSSKKAAEIMKKVLESAVANAEHNEGADVDDLKVSTVFVNEGRSLKRIMPRAKGRADRIVKRSCHITVKVADK</sequence>
<proteinExistence type="inferred from homology"/>
<feature type="chain" id="PRO_1000052630" description="Large ribosomal subunit protein uL22">
    <location>
        <begin position="1"/>
        <end position="110"/>
    </location>
</feature>
<keyword id="KW-0687">Ribonucleoprotein</keyword>
<keyword id="KW-0689">Ribosomal protein</keyword>
<keyword id="KW-0694">RNA-binding</keyword>
<keyword id="KW-0699">rRNA-binding</keyword>
<organism>
    <name type="scientific">Ectopseudomonas mendocina (strain ymp)</name>
    <name type="common">Pseudomonas mendocina</name>
    <dbReference type="NCBI Taxonomy" id="399739"/>
    <lineage>
        <taxon>Bacteria</taxon>
        <taxon>Pseudomonadati</taxon>
        <taxon>Pseudomonadota</taxon>
        <taxon>Gammaproteobacteria</taxon>
        <taxon>Pseudomonadales</taxon>
        <taxon>Pseudomonadaceae</taxon>
        <taxon>Ectopseudomonas</taxon>
    </lineage>
</organism>
<reference key="1">
    <citation type="submission" date="2007-04" db="EMBL/GenBank/DDBJ databases">
        <title>Complete sequence of Pseudomonas mendocina ymp.</title>
        <authorList>
            <consortium name="US DOE Joint Genome Institute"/>
            <person name="Copeland A."/>
            <person name="Lucas S."/>
            <person name="Lapidus A."/>
            <person name="Barry K."/>
            <person name="Glavina del Rio T."/>
            <person name="Dalin E."/>
            <person name="Tice H."/>
            <person name="Pitluck S."/>
            <person name="Kiss H."/>
            <person name="Brettin T."/>
            <person name="Detter J.C."/>
            <person name="Bruce D."/>
            <person name="Han C."/>
            <person name="Schmutz J."/>
            <person name="Larimer F."/>
            <person name="Land M."/>
            <person name="Hauser L."/>
            <person name="Kyrpides N."/>
            <person name="Mikhailova N."/>
            <person name="Hersman L."/>
            <person name="Dubois J."/>
            <person name="Maurice P."/>
            <person name="Richardson P."/>
        </authorList>
    </citation>
    <scope>NUCLEOTIDE SEQUENCE [LARGE SCALE GENOMIC DNA]</scope>
    <source>
        <strain>ymp</strain>
    </source>
</reference>
<protein>
    <recommendedName>
        <fullName evidence="1">Large ribosomal subunit protein uL22</fullName>
    </recommendedName>
    <alternativeName>
        <fullName evidence="2">50S ribosomal protein L22</fullName>
    </alternativeName>
</protein>